<gene>
    <name evidence="1" type="primary">rplA</name>
    <name type="ordered locus">Sfri_0138</name>
</gene>
<keyword id="KW-1185">Reference proteome</keyword>
<keyword id="KW-0678">Repressor</keyword>
<keyword id="KW-0687">Ribonucleoprotein</keyword>
<keyword id="KW-0689">Ribosomal protein</keyword>
<keyword id="KW-0694">RNA-binding</keyword>
<keyword id="KW-0699">rRNA-binding</keyword>
<keyword id="KW-0810">Translation regulation</keyword>
<keyword id="KW-0820">tRNA-binding</keyword>
<evidence type="ECO:0000255" key="1">
    <source>
        <dbReference type="HAMAP-Rule" id="MF_01318"/>
    </source>
</evidence>
<evidence type="ECO:0000305" key="2"/>
<dbReference type="EMBL" id="CP000447">
    <property type="protein sequence ID" value="ABI70001.1"/>
    <property type="molecule type" value="Genomic_DNA"/>
</dbReference>
<dbReference type="RefSeq" id="WP_011635630.1">
    <property type="nucleotide sequence ID" value="NC_008345.1"/>
</dbReference>
<dbReference type="SMR" id="Q089R4"/>
<dbReference type="STRING" id="318167.Sfri_0138"/>
<dbReference type="KEGG" id="sfr:Sfri_0138"/>
<dbReference type="eggNOG" id="COG0081">
    <property type="taxonomic scope" value="Bacteria"/>
</dbReference>
<dbReference type="HOGENOM" id="CLU_062853_0_0_6"/>
<dbReference type="OrthoDB" id="9803740at2"/>
<dbReference type="Proteomes" id="UP000000684">
    <property type="component" value="Chromosome"/>
</dbReference>
<dbReference type="GO" id="GO:0022625">
    <property type="term" value="C:cytosolic large ribosomal subunit"/>
    <property type="evidence" value="ECO:0007669"/>
    <property type="project" value="TreeGrafter"/>
</dbReference>
<dbReference type="GO" id="GO:0019843">
    <property type="term" value="F:rRNA binding"/>
    <property type="evidence" value="ECO:0007669"/>
    <property type="project" value="UniProtKB-UniRule"/>
</dbReference>
<dbReference type="GO" id="GO:0003735">
    <property type="term" value="F:structural constituent of ribosome"/>
    <property type="evidence" value="ECO:0007669"/>
    <property type="project" value="InterPro"/>
</dbReference>
<dbReference type="GO" id="GO:0000049">
    <property type="term" value="F:tRNA binding"/>
    <property type="evidence" value="ECO:0007669"/>
    <property type="project" value="UniProtKB-KW"/>
</dbReference>
<dbReference type="GO" id="GO:0006417">
    <property type="term" value="P:regulation of translation"/>
    <property type="evidence" value="ECO:0007669"/>
    <property type="project" value="UniProtKB-KW"/>
</dbReference>
<dbReference type="GO" id="GO:0006412">
    <property type="term" value="P:translation"/>
    <property type="evidence" value="ECO:0007669"/>
    <property type="project" value="UniProtKB-UniRule"/>
</dbReference>
<dbReference type="CDD" id="cd00403">
    <property type="entry name" value="Ribosomal_L1"/>
    <property type="match status" value="1"/>
</dbReference>
<dbReference type="FunFam" id="3.40.50.790:FF:000001">
    <property type="entry name" value="50S ribosomal protein L1"/>
    <property type="match status" value="1"/>
</dbReference>
<dbReference type="Gene3D" id="3.30.190.20">
    <property type="match status" value="1"/>
</dbReference>
<dbReference type="Gene3D" id="3.40.50.790">
    <property type="match status" value="1"/>
</dbReference>
<dbReference type="HAMAP" id="MF_01318_B">
    <property type="entry name" value="Ribosomal_uL1_B"/>
    <property type="match status" value="1"/>
</dbReference>
<dbReference type="InterPro" id="IPR005878">
    <property type="entry name" value="Ribosom_uL1_bac-type"/>
</dbReference>
<dbReference type="InterPro" id="IPR002143">
    <property type="entry name" value="Ribosomal_uL1"/>
</dbReference>
<dbReference type="InterPro" id="IPR023674">
    <property type="entry name" value="Ribosomal_uL1-like"/>
</dbReference>
<dbReference type="InterPro" id="IPR028364">
    <property type="entry name" value="Ribosomal_uL1/biogenesis"/>
</dbReference>
<dbReference type="InterPro" id="IPR016095">
    <property type="entry name" value="Ribosomal_uL1_3-a/b-sand"/>
</dbReference>
<dbReference type="InterPro" id="IPR023673">
    <property type="entry name" value="Ribosomal_uL1_CS"/>
</dbReference>
<dbReference type="NCBIfam" id="TIGR01169">
    <property type="entry name" value="rplA_bact"/>
    <property type="match status" value="1"/>
</dbReference>
<dbReference type="PANTHER" id="PTHR36427">
    <property type="entry name" value="54S RIBOSOMAL PROTEIN L1, MITOCHONDRIAL"/>
    <property type="match status" value="1"/>
</dbReference>
<dbReference type="PANTHER" id="PTHR36427:SF3">
    <property type="entry name" value="LARGE RIBOSOMAL SUBUNIT PROTEIN UL1M"/>
    <property type="match status" value="1"/>
</dbReference>
<dbReference type="Pfam" id="PF00687">
    <property type="entry name" value="Ribosomal_L1"/>
    <property type="match status" value="1"/>
</dbReference>
<dbReference type="PIRSF" id="PIRSF002155">
    <property type="entry name" value="Ribosomal_L1"/>
    <property type="match status" value="1"/>
</dbReference>
<dbReference type="SUPFAM" id="SSF56808">
    <property type="entry name" value="Ribosomal protein L1"/>
    <property type="match status" value="1"/>
</dbReference>
<dbReference type="PROSITE" id="PS01199">
    <property type="entry name" value="RIBOSOMAL_L1"/>
    <property type="match status" value="1"/>
</dbReference>
<reference key="1">
    <citation type="submission" date="2006-08" db="EMBL/GenBank/DDBJ databases">
        <title>Complete sequence of Shewanella frigidimarina NCIMB 400.</title>
        <authorList>
            <consortium name="US DOE Joint Genome Institute"/>
            <person name="Copeland A."/>
            <person name="Lucas S."/>
            <person name="Lapidus A."/>
            <person name="Barry K."/>
            <person name="Detter J.C."/>
            <person name="Glavina del Rio T."/>
            <person name="Hammon N."/>
            <person name="Israni S."/>
            <person name="Dalin E."/>
            <person name="Tice H."/>
            <person name="Pitluck S."/>
            <person name="Fredrickson J.K."/>
            <person name="Kolker E."/>
            <person name="McCuel L.A."/>
            <person name="DiChristina T."/>
            <person name="Nealson K.H."/>
            <person name="Newman D."/>
            <person name="Tiedje J.M."/>
            <person name="Zhou J."/>
            <person name="Romine M.F."/>
            <person name="Culley D.E."/>
            <person name="Serres M."/>
            <person name="Chertkov O."/>
            <person name="Brettin T."/>
            <person name="Bruce D."/>
            <person name="Han C."/>
            <person name="Tapia R."/>
            <person name="Gilna P."/>
            <person name="Schmutz J."/>
            <person name="Larimer F."/>
            <person name="Land M."/>
            <person name="Hauser L."/>
            <person name="Kyrpides N."/>
            <person name="Mikhailova N."/>
            <person name="Richardson P."/>
        </authorList>
    </citation>
    <scope>NUCLEOTIDE SEQUENCE [LARGE SCALE GENOMIC DNA]</scope>
    <source>
        <strain>NCIMB 400</strain>
    </source>
</reference>
<comment type="function">
    <text evidence="1">Binds directly to 23S rRNA. The L1 stalk is quite mobile in the ribosome, and is involved in E site tRNA release.</text>
</comment>
<comment type="function">
    <text evidence="1">Protein L1 is also a translational repressor protein, it controls the translation of the L11 operon by binding to its mRNA.</text>
</comment>
<comment type="subunit">
    <text evidence="1">Part of the 50S ribosomal subunit.</text>
</comment>
<comment type="similarity">
    <text evidence="1">Belongs to the universal ribosomal protein uL1 family.</text>
</comment>
<sequence length="233" mass="24660">MAKLTKRARVIREKVDATKLYDINEAVVLLQELATAKFVESVDVAVNLGIDPRKSDQNVRGATVLPHGTGRDVRVAVFTQGANAEAAIAAGAELVGMEDLAEKVKAGEMNFDVVIASPDAMRVVGMLGQILGPRGLMPNPKTGTVTPNVAEAVKNAKAGQVRYRNDKNGIIHTTIGKVTFTTEQLKENLESLVSALKKAKPAVAKGIYVKKISISTTMGAGVAIDQGSLEEAK</sequence>
<feature type="chain" id="PRO_0000308100" description="Large ribosomal subunit protein uL1">
    <location>
        <begin position="1"/>
        <end position="233"/>
    </location>
</feature>
<protein>
    <recommendedName>
        <fullName evidence="1">Large ribosomal subunit protein uL1</fullName>
    </recommendedName>
    <alternativeName>
        <fullName evidence="2">50S ribosomal protein L1</fullName>
    </alternativeName>
</protein>
<accession>Q089R4</accession>
<proteinExistence type="inferred from homology"/>
<organism>
    <name type="scientific">Shewanella frigidimarina (strain NCIMB 400)</name>
    <dbReference type="NCBI Taxonomy" id="318167"/>
    <lineage>
        <taxon>Bacteria</taxon>
        <taxon>Pseudomonadati</taxon>
        <taxon>Pseudomonadota</taxon>
        <taxon>Gammaproteobacteria</taxon>
        <taxon>Alteromonadales</taxon>
        <taxon>Shewanellaceae</taxon>
        <taxon>Shewanella</taxon>
    </lineage>
</organism>
<name>RL1_SHEFN</name>